<reference key="1">
    <citation type="journal article" date="2005" name="J. Bacteriol.">
        <title>Simultaneous deficiency of both MurA and p60 proteins generates a rough phenotype in Listeria monocytogenes.</title>
        <authorList>
            <person name="Machata S."/>
            <person name="Hain T."/>
            <person name="Rohde M."/>
            <person name="Chakraborty T."/>
        </authorList>
    </citation>
    <scope>NUCLEOTIDE SEQUENCE [GENOMIC DNA]</scope>
    <source>
        <strain>SLCC5334</strain>
    </source>
</reference>
<sequence>MKQNFDDRKIVKQYREIARQIVKKEGLYKNMDQDELREQTNYWREKFKTKEMSERDKINIFALAREAASRIIGLDAVVVQLIGALVLGDGKVAEMKTGEGKTLMSLFVMFIEVMRGNRVHLVTANEYLARRDREEIGQVLEYLGISVALNESDLDKDQKKAIYTADVIYGTASEFGFDYLRDNMVRQKEDKVQSGLDFVLIDEADSILIDEARTPLLISDRKEEDLSLYQTANKLVKTMLKDEYEIEEHKRFVWLNDAGIEKAQKFWGVESLYSAEGQAELRITMLLMRAHFLMHKDKDYVVLDDEVLIIDPHTGRALPGRRFNDGLHQAIEAKEEVEVKEESRTLATITIQNYFRMYKKISGMTGTAKTEEEEFRQIYNMDVVVIPTNLRINREDVPDDIFYTKKEKGRAIVYEVSWRYEKGQPTLIGTSSIKSNEWISGLLDAAGIPHQVLNAKNHAQEAEIIAKAGKRGMVTLATNMAGRGTDIKLDPDVHKLGGLAVIGTERHESRRIDLQLMGRSGRRGDPGFSKFMISLEDDLLEQFESKSWEKLSVKLKRKAPRDGKPVNSSKIHAVVVNAQKRLEGANYDIRKDLLSYDEVIDLQRKMVYKERDLLLERNKLGVSSEKILREVAEYAFIHPVDIEQEKLEKYYARQKELLGGTKFPVSFDEVSLMEPAEVVEKIVTWHKKERDKFPIETITAIEKEVYLNLMDQMWVMHLDAMVQLREGIHLRAYGQQDPLVMYQKEGAQLFEKFQADYHFYFAHALLELDPDGLVQG</sequence>
<comment type="function">
    <text evidence="1">Part of the Sec protein translocase complex. Interacts with the SecYEG preprotein conducting channel. Has a central role in coupling the hydrolysis of ATP to the transfer of proteins into and across the cell membrane, serving as an ATP-driven molecular motor driving the stepwise translocation of polypeptide chains across the membrane.</text>
</comment>
<comment type="catalytic activity">
    <reaction evidence="1">
        <text>ATP + H2O + cellular proteinSide 1 = ADP + phosphate + cellular proteinSide 2.</text>
        <dbReference type="EC" id="7.4.2.8"/>
    </reaction>
</comment>
<comment type="subunit">
    <text evidence="1">Monomer and homodimer. Part of the essential Sec protein translocation apparatus which comprises SecA, SecYEG and auxiliary proteins SecDF. Other proteins may also be involved.</text>
</comment>
<comment type="subcellular location">
    <subcellularLocation>
        <location evidence="1">Cell membrane</location>
        <topology evidence="1">Peripheral membrane protein</topology>
        <orientation evidence="1">Cytoplasmic side</orientation>
    </subcellularLocation>
    <subcellularLocation>
        <location evidence="1">Cytoplasm</location>
    </subcellularLocation>
    <text evidence="1">Distribution is 50-50.</text>
</comment>
<comment type="similarity">
    <text evidence="1">Belongs to the SecA family.</text>
</comment>
<organism>
    <name type="scientific">Listeria welshimeri</name>
    <dbReference type="NCBI Taxonomy" id="1643"/>
    <lineage>
        <taxon>Bacteria</taxon>
        <taxon>Bacillati</taxon>
        <taxon>Bacillota</taxon>
        <taxon>Bacilli</taxon>
        <taxon>Bacillales</taxon>
        <taxon>Listeriaceae</taxon>
        <taxon>Listeria</taxon>
    </lineage>
</organism>
<protein>
    <recommendedName>
        <fullName evidence="1">Protein translocase subunit SecA 2</fullName>
        <ecNumber evidence="1">7.4.2.8</ecNumber>
    </recommendedName>
</protein>
<accession>Q2WCN1</accession>
<proteinExistence type="inferred from homology"/>
<dbReference type="EC" id="7.4.2.8" evidence="1"/>
<dbReference type="EMBL" id="AM040040">
    <property type="protein sequence ID" value="CAJ01896.2"/>
    <property type="molecule type" value="Genomic_DNA"/>
</dbReference>
<dbReference type="RefSeq" id="WP_011701395.1">
    <property type="nucleotide sequence ID" value="NZ_LT906444.1"/>
</dbReference>
<dbReference type="SMR" id="Q2WCN1"/>
<dbReference type="GeneID" id="61188438"/>
<dbReference type="OMA" id="YKNMDQD"/>
<dbReference type="GO" id="GO:0031522">
    <property type="term" value="C:cell envelope Sec protein transport complex"/>
    <property type="evidence" value="ECO:0007669"/>
    <property type="project" value="TreeGrafter"/>
</dbReference>
<dbReference type="GO" id="GO:0005829">
    <property type="term" value="C:cytosol"/>
    <property type="evidence" value="ECO:0007669"/>
    <property type="project" value="TreeGrafter"/>
</dbReference>
<dbReference type="GO" id="GO:0005886">
    <property type="term" value="C:plasma membrane"/>
    <property type="evidence" value="ECO:0007669"/>
    <property type="project" value="UniProtKB-SubCell"/>
</dbReference>
<dbReference type="GO" id="GO:0005524">
    <property type="term" value="F:ATP binding"/>
    <property type="evidence" value="ECO:0007669"/>
    <property type="project" value="UniProtKB-UniRule"/>
</dbReference>
<dbReference type="GO" id="GO:0008564">
    <property type="term" value="F:protein-exporting ATPase activity"/>
    <property type="evidence" value="ECO:0007669"/>
    <property type="project" value="UniProtKB-EC"/>
</dbReference>
<dbReference type="GO" id="GO:0065002">
    <property type="term" value="P:intracellular protein transmembrane transport"/>
    <property type="evidence" value="ECO:0007669"/>
    <property type="project" value="UniProtKB-UniRule"/>
</dbReference>
<dbReference type="GO" id="GO:0017038">
    <property type="term" value="P:protein import"/>
    <property type="evidence" value="ECO:0007669"/>
    <property type="project" value="InterPro"/>
</dbReference>
<dbReference type="GO" id="GO:0006605">
    <property type="term" value="P:protein targeting"/>
    <property type="evidence" value="ECO:0007669"/>
    <property type="project" value="UniProtKB-UniRule"/>
</dbReference>
<dbReference type="GO" id="GO:0043952">
    <property type="term" value="P:protein transport by the Sec complex"/>
    <property type="evidence" value="ECO:0007669"/>
    <property type="project" value="TreeGrafter"/>
</dbReference>
<dbReference type="CDD" id="cd17928">
    <property type="entry name" value="DEXDc_SecA"/>
    <property type="match status" value="1"/>
</dbReference>
<dbReference type="CDD" id="cd18803">
    <property type="entry name" value="SF2_C_secA"/>
    <property type="match status" value="1"/>
</dbReference>
<dbReference type="FunFam" id="3.40.50.300:FF:000429">
    <property type="entry name" value="Preprotein translocase subunit SecA"/>
    <property type="match status" value="1"/>
</dbReference>
<dbReference type="Gene3D" id="1.10.3060.10">
    <property type="entry name" value="Helical scaffold and wing domains of SecA"/>
    <property type="match status" value="1"/>
</dbReference>
<dbReference type="Gene3D" id="3.40.50.300">
    <property type="entry name" value="P-loop containing nucleotide triphosphate hydrolases"/>
    <property type="match status" value="3"/>
</dbReference>
<dbReference type="Gene3D" id="3.90.1440.10">
    <property type="entry name" value="SecA, preprotein cross-linking domain"/>
    <property type="match status" value="1"/>
</dbReference>
<dbReference type="HAMAP" id="MF_01382">
    <property type="entry name" value="SecA"/>
    <property type="match status" value="1"/>
</dbReference>
<dbReference type="InterPro" id="IPR014001">
    <property type="entry name" value="Helicase_ATP-bd"/>
</dbReference>
<dbReference type="InterPro" id="IPR001650">
    <property type="entry name" value="Helicase_C-like"/>
</dbReference>
<dbReference type="InterPro" id="IPR027417">
    <property type="entry name" value="P-loop_NTPase"/>
</dbReference>
<dbReference type="InterPro" id="IPR000185">
    <property type="entry name" value="SecA"/>
</dbReference>
<dbReference type="InterPro" id="IPR011115">
    <property type="entry name" value="SecA_DEAD"/>
</dbReference>
<dbReference type="InterPro" id="IPR014018">
    <property type="entry name" value="SecA_motor_DEAD"/>
</dbReference>
<dbReference type="InterPro" id="IPR011130">
    <property type="entry name" value="SecA_preprotein_X-link_dom"/>
</dbReference>
<dbReference type="InterPro" id="IPR044722">
    <property type="entry name" value="SecA_SF2_C"/>
</dbReference>
<dbReference type="InterPro" id="IPR011116">
    <property type="entry name" value="SecA_Wing/Scaffold"/>
</dbReference>
<dbReference type="InterPro" id="IPR036266">
    <property type="entry name" value="SecA_Wing/Scaffold_sf"/>
</dbReference>
<dbReference type="InterPro" id="IPR036670">
    <property type="entry name" value="SecA_X-link_sf"/>
</dbReference>
<dbReference type="NCBIfam" id="NF006630">
    <property type="entry name" value="PRK09200.1"/>
    <property type="match status" value="1"/>
</dbReference>
<dbReference type="NCBIfam" id="NF012136">
    <property type="entry name" value="SecA2_Lm"/>
    <property type="match status" value="1"/>
</dbReference>
<dbReference type="PANTHER" id="PTHR30612:SF0">
    <property type="entry name" value="CHLOROPLAST PROTEIN-TRANSPORTING ATPASE"/>
    <property type="match status" value="1"/>
</dbReference>
<dbReference type="PANTHER" id="PTHR30612">
    <property type="entry name" value="SECA INNER MEMBRANE COMPONENT OF SEC PROTEIN SECRETION SYSTEM"/>
    <property type="match status" value="1"/>
</dbReference>
<dbReference type="Pfam" id="PF21090">
    <property type="entry name" value="P-loop_SecA"/>
    <property type="match status" value="1"/>
</dbReference>
<dbReference type="Pfam" id="PF07517">
    <property type="entry name" value="SecA_DEAD"/>
    <property type="match status" value="1"/>
</dbReference>
<dbReference type="Pfam" id="PF01043">
    <property type="entry name" value="SecA_PP_bind"/>
    <property type="match status" value="1"/>
</dbReference>
<dbReference type="Pfam" id="PF07516">
    <property type="entry name" value="SecA_SW"/>
    <property type="match status" value="1"/>
</dbReference>
<dbReference type="PRINTS" id="PR00906">
    <property type="entry name" value="SECA"/>
</dbReference>
<dbReference type="SMART" id="SM00957">
    <property type="entry name" value="SecA_DEAD"/>
    <property type="match status" value="1"/>
</dbReference>
<dbReference type="SMART" id="SM00958">
    <property type="entry name" value="SecA_PP_bind"/>
    <property type="match status" value="1"/>
</dbReference>
<dbReference type="SUPFAM" id="SSF81886">
    <property type="entry name" value="Helical scaffold and wing domains of SecA"/>
    <property type="match status" value="1"/>
</dbReference>
<dbReference type="SUPFAM" id="SSF52540">
    <property type="entry name" value="P-loop containing nucleoside triphosphate hydrolases"/>
    <property type="match status" value="2"/>
</dbReference>
<dbReference type="SUPFAM" id="SSF81767">
    <property type="entry name" value="Pre-protein crosslinking domain of SecA"/>
    <property type="match status" value="1"/>
</dbReference>
<dbReference type="PROSITE" id="PS51196">
    <property type="entry name" value="SECA_MOTOR_DEAD"/>
    <property type="match status" value="1"/>
</dbReference>
<evidence type="ECO:0000255" key="1">
    <source>
        <dbReference type="HAMAP-Rule" id="MF_01382"/>
    </source>
</evidence>
<name>SECA2_LISWE</name>
<keyword id="KW-0067">ATP-binding</keyword>
<keyword id="KW-1003">Cell membrane</keyword>
<keyword id="KW-0963">Cytoplasm</keyword>
<keyword id="KW-0472">Membrane</keyword>
<keyword id="KW-0547">Nucleotide-binding</keyword>
<keyword id="KW-0653">Protein transport</keyword>
<keyword id="KW-1278">Translocase</keyword>
<keyword id="KW-0811">Translocation</keyword>
<keyword id="KW-0813">Transport</keyword>
<feature type="chain" id="PRO_0000318369" description="Protein translocase subunit SecA 2">
    <location>
        <begin position="1"/>
        <end position="776"/>
    </location>
</feature>
<feature type="binding site" evidence="1">
    <location>
        <position position="80"/>
    </location>
    <ligand>
        <name>ATP</name>
        <dbReference type="ChEBI" id="CHEBI:30616"/>
    </ligand>
</feature>
<feature type="binding site" evidence="1">
    <location>
        <begin position="98"/>
        <end position="102"/>
    </location>
    <ligand>
        <name>ATP</name>
        <dbReference type="ChEBI" id="CHEBI:30616"/>
    </ligand>
</feature>
<feature type="binding site" evidence="1">
    <location>
        <position position="486"/>
    </location>
    <ligand>
        <name>ATP</name>
        <dbReference type="ChEBI" id="CHEBI:30616"/>
    </ligand>
</feature>
<gene>
    <name evidence="1" type="primary">secA2</name>
</gene>